<evidence type="ECO:0000250" key="1"/>
<evidence type="ECO:0000255" key="2"/>
<evidence type="ECO:0000305" key="3"/>
<dbReference type="EC" id="3.4.11.1"/>
<dbReference type="EC" id="3.4.11.10"/>
<dbReference type="EMBL" id="L42023">
    <property type="protein sequence ID" value="AAC23351.1"/>
    <property type="molecule type" value="Genomic_DNA"/>
</dbReference>
<dbReference type="PIR" id="C64137">
    <property type="entry name" value="C64137"/>
</dbReference>
<dbReference type="RefSeq" id="NP_439847.1">
    <property type="nucleotide sequence ID" value="NC_000907.1"/>
</dbReference>
<dbReference type="SMR" id="P45334"/>
<dbReference type="STRING" id="71421.HI_1705"/>
<dbReference type="MEROPS" id="M17.003"/>
<dbReference type="EnsemblBacteria" id="AAC23351">
    <property type="protein sequence ID" value="AAC23351"/>
    <property type="gene ID" value="HI_1705"/>
</dbReference>
<dbReference type="KEGG" id="hin:HI_1705"/>
<dbReference type="PATRIC" id="fig|71421.8.peg.1784"/>
<dbReference type="eggNOG" id="COG0260">
    <property type="taxonomic scope" value="Bacteria"/>
</dbReference>
<dbReference type="HOGENOM" id="CLU_013734_2_2_6"/>
<dbReference type="OrthoDB" id="9809354at2"/>
<dbReference type="PhylomeDB" id="P45334"/>
<dbReference type="BioCyc" id="HINF71421:G1GJ1-1721-MONOMER"/>
<dbReference type="Proteomes" id="UP000000579">
    <property type="component" value="Chromosome"/>
</dbReference>
<dbReference type="GO" id="GO:0005737">
    <property type="term" value="C:cytoplasm"/>
    <property type="evidence" value="ECO:0000318"/>
    <property type="project" value="GO_Central"/>
</dbReference>
<dbReference type="GO" id="GO:0004177">
    <property type="term" value="F:aminopeptidase activity"/>
    <property type="evidence" value="ECO:0000318"/>
    <property type="project" value="GO_Central"/>
</dbReference>
<dbReference type="GO" id="GO:0030145">
    <property type="term" value="F:manganese ion binding"/>
    <property type="evidence" value="ECO:0007669"/>
    <property type="project" value="UniProtKB-UniRule"/>
</dbReference>
<dbReference type="GO" id="GO:0070006">
    <property type="term" value="F:metalloaminopeptidase activity"/>
    <property type="evidence" value="ECO:0007669"/>
    <property type="project" value="InterPro"/>
</dbReference>
<dbReference type="GO" id="GO:0006508">
    <property type="term" value="P:proteolysis"/>
    <property type="evidence" value="ECO:0000318"/>
    <property type="project" value="GO_Central"/>
</dbReference>
<dbReference type="CDD" id="cd00433">
    <property type="entry name" value="Peptidase_M17"/>
    <property type="match status" value="1"/>
</dbReference>
<dbReference type="FunFam" id="3.40.630.10:FF:000004">
    <property type="entry name" value="Probable cytosol aminopeptidase"/>
    <property type="match status" value="1"/>
</dbReference>
<dbReference type="Gene3D" id="3.40.220.10">
    <property type="entry name" value="Leucine Aminopeptidase, subunit E, domain 1"/>
    <property type="match status" value="1"/>
</dbReference>
<dbReference type="Gene3D" id="3.40.630.10">
    <property type="entry name" value="Zn peptidases"/>
    <property type="match status" value="1"/>
</dbReference>
<dbReference type="HAMAP" id="MF_00181">
    <property type="entry name" value="Cytosol_peptidase_M17"/>
    <property type="match status" value="1"/>
</dbReference>
<dbReference type="InterPro" id="IPR011356">
    <property type="entry name" value="Leucine_aapep/pepB"/>
</dbReference>
<dbReference type="InterPro" id="IPR043472">
    <property type="entry name" value="Macro_dom-like"/>
</dbReference>
<dbReference type="InterPro" id="IPR000819">
    <property type="entry name" value="Peptidase_M17_C"/>
</dbReference>
<dbReference type="InterPro" id="IPR023042">
    <property type="entry name" value="Peptidase_M17_leu_NH2_pept"/>
</dbReference>
<dbReference type="InterPro" id="IPR008283">
    <property type="entry name" value="Peptidase_M17_N"/>
</dbReference>
<dbReference type="NCBIfam" id="NF002073">
    <property type="entry name" value="PRK00913.1-2"/>
    <property type="match status" value="1"/>
</dbReference>
<dbReference type="NCBIfam" id="NF002074">
    <property type="entry name" value="PRK00913.1-4"/>
    <property type="match status" value="1"/>
</dbReference>
<dbReference type="NCBIfam" id="NF002077">
    <property type="entry name" value="PRK00913.2-4"/>
    <property type="match status" value="1"/>
</dbReference>
<dbReference type="PANTHER" id="PTHR11963:SF23">
    <property type="entry name" value="CYTOSOL AMINOPEPTIDASE"/>
    <property type="match status" value="1"/>
</dbReference>
<dbReference type="PANTHER" id="PTHR11963">
    <property type="entry name" value="LEUCINE AMINOPEPTIDASE-RELATED"/>
    <property type="match status" value="1"/>
</dbReference>
<dbReference type="Pfam" id="PF00883">
    <property type="entry name" value="Peptidase_M17"/>
    <property type="match status" value="1"/>
</dbReference>
<dbReference type="Pfam" id="PF02789">
    <property type="entry name" value="Peptidase_M17_N"/>
    <property type="match status" value="1"/>
</dbReference>
<dbReference type="PRINTS" id="PR00481">
    <property type="entry name" value="LAMNOPPTDASE"/>
</dbReference>
<dbReference type="SUPFAM" id="SSF52949">
    <property type="entry name" value="Macro domain-like"/>
    <property type="match status" value="1"/>
</dbReference>
<dbReference type="SUPFAM" id="SSF53187">
    <property type="entry name" value="Zn-dependent exopeptidases"/>
    <property type="match status" value="1"/>
</dbReference>
<dbReference type="PROSITE" id="PS00631">
    <property type="entry name" value="CYTOSOL_AP"/>
    <property type="match status" value="1"/>
</dbReference>
<name>AMPA_HAEIN</name>
<keyword id="KW-0031">Aminopeptidase</keyword>
<keyword id="KW-0963">Cytoplasm</keyword>
<keyword id="KW-0378">Hydrolase</keyword>
<keyword id="KW-0464">Manganese</keyword>
<keyword id="KW-0479">Metal-binding</keyword>
<keyword id="KW-0645">Protease</keyword>
<keyword id="KW-1185">Reference proteome</keyword>
<protein>
    <recommendedName>
        <fullName>Cytosol aminopeptidase</fullName>
        <ecNumber>3.4.11.1</ecNumber>
    </recommendedName>
    <alternativeName>
        <fullName>Leucine aminopeptidase</fullName>
        <shortName>LAP</shortName>
        <ecNumber>3.4.11.10</ecNumber>
    </alternativeName>
    <alternativeName>
        <fullName>Leucyl aminopeptidase</fullName>
    </alternativeName>
</protein>
<feature type="chain" id="PRO_0000165758" description="Cytosol aminopeptidase">
    <location>
        <begin position="1"/>
        <end position="491"/>
    </location>
</feature>
<feature type="active site" evidence="2">
    <location>
        <position position="275"/>
    </location>
</feature>
<feature type="active site" evidence="2">
    <location>
        <position position="349"/>
    </location>
</feature>
<feature type="binding site" evidence="1">
    <location>
        <position position="263"/>
    </location>
    <ligand>
        <name>Mn(2+)</name>
        <dbReference type="ChEBI" id="CHEBI:29035"/>
        <label>2</label>
    </ligand>
</feature>
<feature type="binding site" evidence="1">
    <location>
        <position position="268"/>
    </location>
    <ligand>
        <name>Mn(2+)</name>
        <dbReference type="ChEBI" id="CHEBI:29035"/>
        <label>1</label>
    </ligand>
</feature>
<feature type="binding site" evidence="1">
    <location>
        <position position="268"/>
    </location>
    <ligand>
        <name>Mn(2+)</name>
        <dbReference type="ChEBI" id="CHEBI:29035"/>
        <label>2</label>
    </ligand>
</feature>
<feature type="binding site" evidence="1">
    <location>
        <position position="286"/>
    </location>
    <ligand>
        <name>Mn(2+)</name>
        <dbReference type="ChEBI" id="CHEBI:29035"/>
        <label>2</label>
    </ligand>
</feature>
<feature type="binding site" evidence="1">
    <location>
        <position position="345"/>
    </location>
    <ligand>
        <name>Mn(2+)</name>
        <dbReference type="ChEBI" id="CHEBI:29035"/>
        <label>1</label>
    </ligand>
</feature>
<feature type="binding site" evidence="1">
    <location>
        <position position="347"/>
    </location>
    <ligand>
        <name>Mn(2+)</name>
        <dbReference type="ChEBI" id="CHEBI:29035"/>
        <label>1</label>
    </ligand>
</feature>
<feature type="binding site" evidence="1">
    <location>
        <position position="347"/>
    </location>
    <ligand>
        <name>Mn(2+)</name>
        <dbReference type="ChEBI" id="CHEBI:29035"/>
        <label>2</label>
    </ligand>
</feature>
<comment type="function">
    <text evidence="1">Presumably involved in the processing and regular turnover of intracellular proteins. Catalyzes the removal of unsubstituted N-terminal amino acids from various peptides (By similarity).</text>
</comment>
<comment type="catalytic activity">
    <reaction>
        <text>Release of an N-terminal amino acid, Xaa-|-Yaa-, in which Xaa is preferably Leu, but may be other amino acids including Pro although not Arg or Lys, and Yaa may be Pro. Amino acid amides and methyl esters are also readily hydrolyzed, but rates on arylamides are exceedingly low.</text>
        <dbReference type="EC" id="3.4.11.1"/>
    </reaction>
</comment>
<comment type="catalytic activity">
    <reaction>
        <text>Release of an N-terminal amino acid, preferentially leucine, but not glutamic or aspartic acids.</text>
        <dbReference type="EC" id="3.4.11.10"/>
    </reaction>
</comment>
<comment type="cofactor">
    <cofactor evidence="1">
        <name>Mn(2+)</name>
        <dbReference type="ChEBI" id="CHEBI:29035"/>
    </cofactor>
    <text evidence="1">Binds 2 manganese ions per subunit.</text>
</comment>
<comment type="subcellular location">
    <subcellularLocation>
        <location evidence="1">Cytoplasm</location>
    </subcellularLocation>
</comment>
<comment type="similarity">
    <text evidence="3">Belongs to the peptidase M17 family.</text>
</comment>
<proteinExistence type="inferred from homology"/>
<sequence>MKYQAKNTALSQATDCIVLGVYENNKFSKSFNEIDQLTQGYLNDLVKSGELTGKLAQTVLLRDLQGLSAKRLLIVGCGKKGELTERQYKQIIQAVLKTLKETNTREVISYLTEIELKDRDLYWNIRFAIETIEHTNYQFDHFKSQKAETSVLESFIFNTDCAQAQQAISHANAISSGIKAARDIANMPPNICNPAYLAEQAKNLAENSTALSLKVVDEEEMAKLGMNAYLAVSKGSENRAYMSVLTFNNAPDKNAKPIVLVGKGLTFDAGGISLKPAADMDEMKYDMCGAASVFGTMKTIAQLNLPLNVIGVLAGCENLPDGNAYRPGDILTTMNGLTVEVLNTDAEGRLVLCDTLTYVERFEPELVIDVATLTGACVVALGQHNSGLVSTDNNLANALLQAATETTDKAWRLPLSEEYQEQLKSPFADLANIGGRWGGAITAGAFLSNFTKKYRWAHLDIAGTAWLQGANKGATGRPVSLLTQFLINQVK</sequence>
<organism>
    <name type="scientific">Haemophilus influenzae (strain ATCC 51907 / DSM 11121 / KW20 / Rd)</name>
    <dbReference type="NCBI Taxonomy" id="71421"/>
    <lineage>
        <taxon>Bacteria</taxon>
        <taxon>Pseudomonadati</taxon>
        <taxon>Pseudomonadota</taxon>
        <taxon>Gammaproteobacteria</taxon>
        <taxon>Pasteurellales</taxon>
        <taxon>Pasteurellaceae</taxon>
        <taxon>Haemophilus</taxon>
    </lineage>
</organism>
<reference key="1">
    <citation type="journal article" date="1995" name="Science">
        <title>Whole-genome random sequencing and assembly of Haemophilus influenzae Rd.</title>
        <authorList>
            <person name="Fleischmann R.D."/>
            <person name="Adams M.D."/>
            <person name="White O."/>
            <person name="Clayton R.A."/>
            <person name="Kirkness E.F."/>
            <person name="Kerlavage A.R."/>
            <person name="Bult C.J."/>
            <person name="Tomb J.-F."/>
            <person name="Dougherty B.A."/>
            <person name="Merrick J.M."/>
            <person name="McKenney K."/>
            <person name="Sutton G.G."/>
            <person name="FitzHugh W."/>
            <person name="Fields C.A."/>
            <person name="Gocayne J.D."/>
            <person name="Scott J.D."/>
            <person name="Shirley R."/>
            <person name="Liu L.-I."/>
            <person name="Glodek A."/>
            <person name="Kelley J.M."/>
            <person name="Weidman J.F."/>
            <person name="Phillips C.A."/>
            <person name="Spriggs T."/>
            <person name="Hedblom E."/>
            <person name="Cotton M.D."/>
            <person name="Utterback T.R."/>
            <person name="Hanna M.C."/>
            <person name="Nguyen D.T."/>
            <person name="Saudek D.M."/>
            <person name="Brandon R.C."/>
            <person name="Fine L.D."/>
            <person name="Fritchman J.L."/>
            <person name="Fuhrmann J.L."/>
            <person name="Geoghagen N.S.M."/>
            <person name="Gnehm C.L."/>
            <person name="McDonald L.A."/>
            <person name="Small K.V."/>
            <person name="Fraser C.M."/>
            <person name="Smith H.O."/>
            <person name="Venter J.C."/>
        </authorList>
    </citation>
    <scope>NUCLEOTIDE SEQUENCE [LARGE SCALE GENOMIC DNA]</scope>
    <source>
        <strain>ATCC 51907 / DSM 11121 / KW20 / Rd</strain>
    </source>
</reference>
<accession>P45334</accession>
<gene>
    <name type="primary">pepA</name>
    <name type="ordered locus">HI_1705</name>
</gene>